<gene>
    <name evidence="1" type="primary">gcvPA</name>
    <name type="ordered locus">Saro_1852</name>
</gene>
<proteinExistence type="inferred from homology"/>
<reference key="1">
    <citation type="submission" date="2006-01" db="EMBL/GenBank/DDBJ databases">
        <title>Complete sequence of Novosphingobium aromaticivorans DSM 12444.</title>
        <authorList>
            <consortium name="US DOE Joint Genome Institute"/>
            <person name="Copeland A."/>
            <person name="Lucas S."/>
            <person name="Lapidus A."/>
            <person name="Barry K."/>
            <person name="Detter J.C."/>
            <person name="Glavina T."/>
            <person name="Hammon N."/>
            <person name="Israni S."/>
            <person name="Pitluck S."/>
            <person name="Chain P."/>
            <person name="Malfatti S."/>
            <person name="Shin M."/>
            <person name="Vergez L."/>
            <person name="Schmutz J."/>
            <person name="Larimer F."/>
            <person name="Land M."/>
            <person name="Kyrpides N."/>
            <person name="Ivanova N."/>
            <person name="Fredrickson J."/>
            <person name="Balkwill D."/>
            <person name="Romine M.F."/>
            <person name="Richardson P."/>
        </authorList>
    </citation>
    <scope>NUCLEOTIDE SEQUENCE [LARGE SCALE GENOMIC DNA]</scope>
    <source>
        <strain>ATCC 700278 / DSM 12444 / CCUG 56034 / CIP 105152 / NBRC 16084 / F199</strain>
    </source>
</reference>
<dbReference type="EC" id="1.4.4.2" evidence="1"/>
<dbReference type="EMBL" id="CP000248">
    <property type="protein sequence ID" value="ABD26292.1"/>
    <property type="molecule type" value="Genomic_DNA"/>
</dbReference>
<dbReference type="RefSeq" id="WP_011445502.1">
    <property type="nucleotide sequence ID" value="NC_007794.1"/>
</dbReference>
<dbReference type="SMR" id="Q2G781"/>
<dbReference type="STRING" id="279238.Saro_1852"/>
<dbReference type="KEGG" id="nar:Saro_1852"/>
<dbReference type="eggNOG" id="COG0403">
    <property type="taxonomic scope" value="Bacteria"/>
</dbReference>
<dbReference type="HOGENOM" id="CLU_004620_0_2_5"/>
<dbReference type="Proteomes" id="UP000009134">
    <property type="component" value="Chromosome"/>
</dbReference>
<dbReference type="GO" id="GO:0004375">
    <property type="term" value="F:glycine dehydrogenase (decarboxylating) activity"/>
    <property type="evidence" value="ECO:0007669"/>
    <property type="project" value="UniProtKB-EC"/>
</dbReference>
<dbReference type="GO" id="GO:0019464">
    <property type="term" value="P:glycine decarboxylation via glycine cleavage system"/>
    <property type="evidence" value="ECO:0007669"/>
    <property type="project" value="UniProtKB-UniRule"/>
</dbReference>
<dbReference type="GO" id="GO:0009116">
    <property type="term" value="P:nucleoside metabolic process"/>
    <property type="evidence" value="ECO:0007669"/>
    <property type="project" value="InterPro"/>
</dbReference>
<dbReference type="Gene3D" id="3.90.1150.10">
    <property type="entry name" value="Aspartate Aminotransferase, domain 1"/>
    <property type="match status" value="1"/>
</dbReference>
<dbReference type="Gene3D" id="3.40.640.10">
    <property type="entry name" value="Type I PLP-dependent aspartate aminotransferase-like (Major domain)"/>
    <property type="match status" value="1"/>
</dbReference>
<dbReference type="HAMAP" id="MF_00712">
    <property type="entry name" value="GcvPA"/>
    <property type="match status" value="1"/>
</dbReference>
<dbReference type="InterPro" id="IPR023010">
    <property type="entry name" value="GcvPA"/>
</dbReference>
<dbReference type="InterPro" id="IPR049315">
    <property type="entry name" value="GDC-P_N"/>
</dbReference>
<dbReference type="InterPro" id="IPR015424">
    <property type="entry name" value="PyrdxlP-dep_Trfase"/>
</dbReference>
<dbReference type="InterPro" id="IPR015421">
    <property type="entry name" value="PyrdxlP-dep_Trfase_major"/>
</dbReference>
<dbReference type="InterPro" id="IPR015422">
    <property type="entry name" value="PyrdxlP-dep_Trfase_small"/>
</dbReference>
<dbReference type="NCBIfam" id="NF001696">
    <property type="entry name" value="PRK00451.1"/>
    <property type="match status" value="1"/>
</dbReference>
<dbReference type="PANTHER" id="PTHR42806">
    <property type="entry name" value="GLYCINE CLEAVAGE SYSTEM P-PROTEIN"/>
    <property type="match status" value="1"/>
</dbReference>
<dbReference type="PANTHER" id="PTHR42806:SF1">
    <property type="entry name" value="GLYCINE DEHYDROGENASE (DECARBOXYLATING)"/>
    <property type="match status" value="1"/>
</dbReference>
<dbReference type="Pfam" id="PF02347">
    <property type="entry name" value="GDC-P"/>
    <property type="match status" value="1"/>
</dbReference>
<dbReference type="PIRSF" id="PIRSF006815">
    <property type="entry name" value="GcvPA"/>
    <property type="match status" value="1"/>
</dbReference>
<dbReference type="SUPFAM" id="SSF53383">
    <property type="entry name" value="PLP-dependent transferases"/>
    <property type="match status" value="1"/>
</dbReference>
<comment type="function">
    <text evidence="1">The glycine cleavage system catalyzes the degradation of glycine. The P protein binds the alpha-amino group of glycine through its pyridoxal phosphate cofactor; CO(2) is released and the remaining methylamine moiety is then transferred to the lipoamide cofactor of the H protein.</text>
</comment>
<comment type="catalytic activity">
    <reaction evidence="1">
        <text>N(6)-[(R)-lipoyl]-L-lysyl-[glycine-cleavage complex H protein] + glycine + H(+) = N(6)-[(R)-S(8)-aminomethyldihydrolipoyl]-L-lysyl-[glycine-cleavage complex H protein] + CO2</text>
        <dbReference type="Rhea" id="RHEA:24304"/>
        <dbReference type="Rhea" id="RHEA-COMP:10494"/>
        <dbReference type="Rhea" id="RHEA-COMP:10495"/>
        <dbReference type="ChEBI" id="CHEBI:15378"/>
        <dbReference type="ChEBI" id="CHEBI:16526"/>
        <dbReference type="ChEBI" id="CHEBI:57305"/>
        <dbReference type="ChEBI" id="CHEBI:83099"/>
        <dbReference type="ChEBI" id="CHEBI:83143"/>
        <dbReference type="EC" id="1.4.4.2"/>
    </reaction>
</comment>
<comment type="subunit">
    <text evidence="1">The glycine cleavage system is composed of four proteins: P, T, L and H. In this organism, the P 'protein' is a heterodimer of two subunits.</text>
</comment>
<comment type="similarity">
    <text evidence="1">Belongs to the GcvP family. N-terminal subunit subfamily.</text>
</comment>
<evidence type="ECO:0000255" key="1">
    <source>
        <dbReference type="HAMAP-Rule" id="MF_00712"/>
    </source>
</evidence>
<feature type="chain" id="PRO_1000045672" description="Probable glycine dehydrogenase (decarboxylating) subunit 1">
    <location>
        <begin position="1"/>
        <end position="452"/>
    </location>
</feature>
<protein>
    <recommendedName>
        <fullName evidence="1">Probable glycine dehydrogenase (decarboxylating) subunit 1</fullName>
        <ecNumber evidence="1">1.4.4.2</ecNumber>
    </recommendedName>
    <alternativeName>
        <fullName evidence="1">Glycine cleavage system P-protein subunit 1</fullName>
    </alternativeName>
    <alternativeName>
        <fullName evidence="1">Glycine decarboxylase subunit 1</fullName>
    </alternativeName>
    <alternativeName>
        <fullName evidence="1">Glycine dehydrogenase (aminomethyl-transferring) subunit 1</fullName>
    </alternativeName>
</protein>
<organism>
    <name type="scientific">Novosphingobium aromaticivorans (strain ATCC 700278 / DSM 12444 / CCUG 56034 / CIP 105152 / NBRC 16084 / F199)</name>
    <dbReference type="NCBI Taxonomy" id="279238"/>
    <lineage>
        <taxon>Bacteria</taxon>
        <taxon>Pseudomonadati</taxon>
        <taxon>Pseudomonadota</taxon>
        <taxon>Alphaproteobacteria</taxon>
        <taxon>Sphingomonadales</taxon>
        <taxon>Sphingomonadaceae</taxon>
        <taxon>Novosphingobium</taxon>
    </lineage>
</organism>
<name>GCSPA_NOVAD</name>
<sequence>MRYLPLTDADRSAMLSVVGAGSVDELFADVPAEARLSAPIAGLPNHASEMAVERHMARLSANNVTAGSVPFFLGAGAYRHHVPATVDHMIQRGEFLTAYTPYQPEIAQGTLQVLFEFQTQVARLFGTDVANASLYDGSTACWEAIAMAGRITKRGKALLSGGLHPHYVETARTMARFTGDVLDTSAPVLTAAPDDDALVARIDGETSCVVVQYPDILGRIPDLAKIAAAAQAQGALLITVVTEPVALGVLQSPGSLGADIVVGEGQSLGVGLQFGGPYLGLFGCREKYLRQIPGRLCGETVDADGKRGFVLTLSTREQHIRREKATSNICTNSGLCALAFSIHLTLLGGSGLADMARLSHLAARKTAAALAQVSGIEVVNSHFFNEFTVALPHDARQIVRDLADRHVLGGVSLGRLYPQEAALANGMVVAATECTTDEDIAALVAALKEVLA</sequence>
<keyword id="KW-0560">Oxidoreductase</keyword>
<keyword id="KW-1185">Reference proteome</keyword>
<accession>Q2G781</accession>